<keyword id="KW-1003">Cell membrane</keyword>
<keyword id="KW-0408">Iron</keyword>
<keyword id="KW-0472">Membrane</keyword>
<keyword id="KW-0479">Metal-binding</keyword>
<keyword id="KW-0503">Monooxygenase</keyword>
<keyword id="KW-0560">Oxidoreductase</keyword>
<keyword id="KW-1185">Reference proteome</keyword>
<keyword id="KW-0831">Ubiquinone biosynthesis</keyword>
<reference key="1">
    <citation type="journal article" date="2006" name="Nat. Biotechnol.">
        <title>Genome sequence of the bioplastic-producing 'Knallgas' bacterium Ralstonia eutropha H16.</title>
        <authorList>
            <person name="Pohlmann A."/>
            <person name="Fricke W.F."/>
            <person name="Reinecke F."/>
            <person name="Kusian B."/>
            <person name="Liesegang H."/>
            <person name="Cramm R."/>
            <person name="Eitinger T."/>
            <person name="Ewering C."/>
            <person name="Poetter M."/>
            <person name="Schwartz E."/>
            <person name="Strittmatter A."/>
            <person name="Voss I."/>
            <person name="Gottschalk G."/>
            <person name="Steinbuechel A."/>
            <person name="Friedrich B."/>
            <person name="Bowien B."/>
        </authorList>
    </citation>
    <scope>NUCLEOTIDE SEQUENCE [LARGE SCALE GENOMIC DNA]</scope>
    <source>
        <strain>ATCC 17699 / DSM 428 / KCTC 22496 / NCIMB 10442 / H16 / Stanier 337</strain>
    </source>
</reference>
<gene>
    <name evidence="1" type="primary">coq7</name>
    <name type="ordered locus">H16_A3283</name>
</gene>
<feature type="chain" id="PRO_0000338725" description="3-demethoxyubiquinol 3-hydroxylase">
    <location>
        <begin position="1"/>
        <end position="207"/>
    </location>
</feature>
<feature type="binding site" evidence="1">
    <location>
        <position position="56"/>
    </location>
    <ligand>
        <name>Fe cation</name>
        <dbReference type="ChEBI" id="CHEBI:24875"/>
        <label>1</label>
    </ligand>
</feature>
<feature type="binding site" evidence="1">
    <location>
        <position position="86"/>
    </location>
    <ligand>
        <name>Fe cation</name>
        <dbReference type="ChEBI" id="CHEBI:24875"/>
        <label>1</label>
    </ligand>
</feature>
<feature type="binding site" evidence="1">
    <location>
        <position position="86"/>
    </location>
    <ligand>
        <name>Fe cation</name>
        <dbReference type="ChEBI" id="CHEBI:24875"/>
        <label>2</label>
    </ligand>
</feature>
<feature type="binding site" evidence="1">
    <location>
        <position position="89"/>
    </location>
    <ligand>
        <name>Fe cation</name>
        <dbReference type="ChEBI" id="CHEBI:24875"/>
        <label>1</label>
    </ligand>
</feature>
<feature type="binding site" evidence="1">
    <location>
        <position position="138"/>
    </location>
    <ligand>
        <name>Fe cation</name>
        <dbReference type="ChEBI" id="CHEBI:24875"/>
        <label>2</label>
    </ligand>
</feature>
<feature type="binding site" evidence="1">
    <location>
        <position position="170"/>
    </location>
    <ligand>
        <name>Fe cation</name>
        <dbReference type="ChEBI" id="CHEBI:24875"/>
        <label>1</label>
    </ligand>
</feature>
<feature type="binding site" evidence="1">
    <location>
        <position position="170"/>
    </location>
    <ligand>
        <name>Fe cation</name>
        <dbReference type="ChEBI" id="CHEBI:24875"/>
        <label>2</label>
    </ligand>
</feature>
<feature type="binding site" evidence="1">
    <location>
        <position position="173"/>
    </location>
    <ligand>
        <name>Fe cation</name>
        <dbReference type="ChEBI" id="CHEBI:24875"/>
        <label>2</label>
    </ligand>
</feature>
<proteinExistence type="inferred from homology"/>
<comment type="function">
    <text evidence="1">Catalyzes the hydroxylation of 2-nonaprenyl-3-methyl-6-methoxy-1,4-benzoquinol during ubiquinone biosynthesis.</text>
</comment>
<comment type="catalytic activity">
    <reaction evidence="1">
        <text>a 5-methoxy-2-methyl-3-(all-trans-polyprenyl)benzene-1,4-diol + AH2 + O2 = a 3-demethylubiquinol + A + H2O</text>
        <dbReference type="Rhea" id="RHEA:50908"/>
        <dbReference type="Rhea" id="RHEA-COMP:10859"/>
        <dbReference type="Rhea" id="RHEA-COMP:10914"/>
        <dbReference type="ChEBI" id="CHEBI:13193"/>
        <dbReference type="ChEBI" id="CHEBI:15377"/>
        <dbReference type="ChEBI" id="CHEBI:15379"/>
        <dbReference type="ChEBI" id="CHEBI:17499"/>
        <dbReference type="ChEBI" id="CHEBI:84167"/>
        <dbReference type="ChEBI" id="CHEBI:84422"/>
        <dbReference type="EC" id="1.14.99.60"/>
    </reaction>
</comment>
<comment type="cofactor">
    <cofactor evidence="1">
        <name>Fe cation</name>
        <dbReference type="ChEBI" id="CHEBI:24875"/>
    </cofactor>
    <text evidence="1">Binds 2 iron ions per subunit.</text>
</comment>
<comment type="pathway">
    <text evidence="1">Cofactor biosynthesis; ubiquinone biosynthesis.</text>
</comment>
<comment type="subcellular location">
    <subcellularLocation>
        <location evidence="1">Cell membrane</location>
        <topology evidence="1">Peripheral membrane protein</topology>
    </subcellularLocation>
</comment>
<comment type="similarity">
    <text evidence="1">Belongs to the COQ7 family.</text>
</comment>
<dbReference type="EC" id="1.14.99.60" evidence="1"/>
<dbReference type="EMBL" id="AM260479">
    <property type="protein sequence ID" value="CAJ94357.1"/>
    <property type="molecule type" value="Genomic_DNA"/>
</dbReference>
<dbReference type="RefSeq" id="WP_010814779.1">
    <property type="nucleotide sequence ID" value="NZ_CP039287.1"/>
</dbReference>
<dbReference type="SMR" id="Q0K6L4"/>
<dbReference type="STRING" id="381666.H16_A3283"/>
<dbReference type="KEGG" id="reh:H16_A3283"/>
<dbReference type="eggNOG" id="COG2941">
    <property type="taxonomic scope" value="Bacteria"/>
</dbReference>
<dbReference type="HOGENOM" id="CLU_088601_0_0_4"/>
<dbReference type="OrthoDB" id="5192789at2"/>
<dbReference type="UniPathway" id="UPA00232"/>
<dbReference type="Proteomes" id="UP000008210">
    <property type="component" value="Chromosome 1"/>
</dbReference>
<dbReference type="GO" id="GO:0005886">
    <property type="term" value="C:plasma membrane"/>
    <property type="evidence" value="ECO:0007669"/>
    <property type="project" value="UniProtKB-SubCell"/>
</dbReference>
<dbReference type="GO" id="GO:0008682">
    <property type="term" value="F:3-demethoxyubiquinol 3-hydroxylase activity"/>
    <property type="evidence" value="ECO:0007669"/>
    <property type="project" value="UniProtKB-EC"/>
</dbReference>
<dbReference type="GO" id="GO:0046872">
    <property type="term" value="F:metal ion binding"/>
    <property type="evidence" value="ECO:0007669"/>
    <property type="project" value="UniProtKB-KW"/>
</dbReference>
<dbReference type="GO" id="GO:0006744">
    <property type="term" value="P:ubiquinone biosynthetic process"/>
    <property type="evidence" value="ECO:0007669"/>
    <property type="project" value="UniProtKB-UniRule"/>
</dbReference>
<dbReference type="CDD" id="cd01042">
    <property type="entry name" value="DMQH"/>
    <property type="match status" value="1"/>
</dbReference>
<dbReference type="Gene3D" id="1.20.1260.10">
    <property type="match status" value="1"/>
</dbReference>
<dbReference type="HAMAP" id="MF_01658">
    <property type="entry name" value="COQ7"/>
    <property type="match status" value="1"/>
</dbReference>
<dbReference type="InterPro" id="IPR047809">
    <property type="entry name" value="COQ7_proteobact"/>
</dbReference>
<dbReference type="InterPro" id="IPR012347">
    <property type="entry name" value="Ferritin-like"/>
</dbReference>
<dbReference type="InterPro" id="IPR009078">
    <property type="entry name" value="Ferritin-like_SF"/>
</dbReference>
<dbReference type="InterPro" id="IPR011566">
    <property type="entry name" value="Ubq_synth_Coq7"/>
</dbReference>
<dbReference type="NCBIfam" id="NF033656">
    <property type="entry name" value="DMQ_monoox_COQ7"/>
    <property type="match status" value="1"/>
</dbReference>
<dbReference type="PANTHER" id="PTHR11237:SF4">
    <property type="entry name" value="5-DEMETHOXYUBIQUINONE HYDROXYLASE, MITOCHONDRIAL"/>
    <property type="match status" value="1"/>
</dbReference>
<dbReference type="PANTHER" id="PTHR11237">
    <property type="entry name" value="COENZYME Q10 BIOSYNTHESIS PROTEIN 7"/>
    <property type="match status" value="1"/>
</dbReference>
<dbReference type="Pfam" id="PF03232">
    <property type="entry name" value="COQ7"/>
    <property type="match status" value="1"/>
</dbReference>
<dbReference type="SUPFAM" id="SSF47240">
    <property type="entry name" value="Ferritin-like"/>
    <property type="match status" value="1"/>
</dbReference>
<accession>Q0K6L4</accession>
<organism>
    <name type="scientific">Cupriavidus necator (strain ATCC 17699 / DSM 428 / KCTC 22496 / NCIMB 10442 / H16 / Stanier 337)</name>
    <name type="common">Ralstonia eutropha</name>
    <dbReference type="NCBI Taxonomy" id="381666"/>
    <lineage>
        <taxon>Bacteria</taxon>
        <taxon>Pseudomonadati</taxon>
        <taxon>Pseudomonadota</taxon>
        <taxon>Betaproteobacteria</taxon>
        <taxon>Burkholderiales</taxon>
        <taxon>Burkholderiaceae</taxon>
        <taxon>Cupriavidus</taxon>
    </lineage>
</organism>
<evidence type="ECO:0000255" key="1">
    <source>
        <dbReference type="HAMAP-Rule" id="MF_01658"/>
    </source>
</evidence>
<protein>
    <recommendedName>
        <fullName evidence="1">3-demethoxyubiquinol 3-hydroxylase</fullName>
        <shortName evidence="1">DMQ hydroxylase</shortName>
        <ecNumber evidence="1">1.14.99.60</ecNumber>
    </recommendedName>
    <alternativeName>
        <fullName evidence="1">2-nonaprenyl-3-methyl-6-methoxy-1,4-benzoquinol hydroxylase</fullName>
    </alternativeName>
</protein>
<name>COQ7_CUPNH</name>
<sequence length="207" mass="22697">MDTLIKEFDVALRAIAGATRTARANPADRLAPDTEQMSADERRHVAGLMRINHVGEVCAQALYQAQKLTARDGAVRAQMDAAAREEEDHLAWCAERLRELGSRPSLLNPLWYAGAFAIGWMAGRAGDRVSLGFVAETERQVEHHLGGHLDRLPEADGRSRAILEQMRDDEIRHGNAARDAGGIPLPAPVRALMRGASRVMTTAAYRI</sequence>